<organism>
    <name type="scientific">Geotalea daltonii (strain DSM 22248 / JCM 15807 / FRC-32)</name>
    <name type="common">Geobacter daltonii</name>
    <dbReference type="NCBI Taxonomy" id="316067"/>
    <lineage>
        <taxon>Bacteria</taxon>
        <taxon>Pseudomonadati</taxon>
        <taxon>Thermodesulfobacteriota</taxon>
        <taxon>Desulfuromonadia</taxon>
        <taxon>Geobacterales</taxon>
        <taxon>Geobacteraceae</taxon>
        <taxon>Geotalea</taxon>
    </lineage>
</organism>
<dbReference type="EC" id="1.1.1.27" evidence="1"/>
<dbReference type="EMBL" id="CP001390">
    <property type="protein sequence ID" value="ACM18793.1"/>
    <property type="molecule type" value="Genomic_DNA"/>
</dbReference>
<dbReference type="RefSeq" id="WP_012645522.1">
    <property type="nucleotide sequence ID" value="NC_011979.1"/>
</dbReference>
<dbReference type="SMR" id="B9LZ61"/>
<dbReference type="STRING" id="316067.Geob_0424"/>
<dbReference type="KEGG" id="geo:Geob_0424"/>
<dbReference type="eggNOG" id="COG0039">
    <property type="taxonomic scope" value="Bacteria"/>
</dbReference>
<dbReference type="HOGENOM" id="CLU_045401_1_1_7"/>
<dbReference type="OrthoDB" id="9802969at2"/>
<dbReference type="UniPathway" id="UPA00554">
    <property type="reaction ID" value="UER00611"/>
</dbReference>
<dbReference type="Proteomes" id="UP000007721">
    <property type="component" value="Chromosome"/>
</dbReference>
<dbReference type="GO" id="GO:0005737">
    <property type="term" value="C:cytoplasm"/>
    <property type="evidence" value="ECO:0007669"/>
    <property type="project" value="UniProtKB-SubCell"/>
</dbReference>
<dbReference type="GO" id="GO:0004459">
    <property type="term" value="F:L-lactate dehydrogenase activity"/>
    <property type="evidence" value="ECO:0007669"/>
    <property type="project" value="UniProtKB-UniRule"/>
</dbReference>
<dbReference type="GO" id="GO:0006096">
    <property type="term" value="P:glycolytic process"/>
    <property type="evidence" value="ECO:0007669"/>
    <property type="project" value="UniProtKB-UniRule"/>
</dbReference>
<dbReference type="GO" id="GO:0006089">
    <property type="term" value="P:lactate metabolic process"/>
    <property type="evidence" value="ECO:0007669"/>
    <property type="project" value="TreeGrafter"/>
</dbReference>
<dbReference type="CDD" id="cd05292">
    <property type="entry name" value="LDH_2"/>
    <property type="match status" value="1"/>
</dbReference>
<dbReference type="Gene3D" id="3.90.110.10">
    <property type="entry name" value="Lactate dehydrogenase/glycoside hydrolase, family 4, C-terminal"/>
    <property type="match status" value="1"/>
</dbReference>
<dbReference type="Gene3D" id="3.40.50.720">
    <property type="entry name" value="NAD(P)-binding Rossmann-like Domain"/>
    <property type="match status" value="1"/>
</dbReference>
<dbReference type="HAMAP" id="MF_00488">
    <property type="entry name" value="Lactate_dehydrog"/>
    <property type="match status" value="1"/>
</dbReference>
<dbReference type="InterPro" id="IPR001557">
    <property type="entry name" value="L-lactate/malate_DH"/>
</dbReference>
<dbReference type="InterPro" id="IPR011304">
    <property type="entry name" value="L-lactate_DH"/>
</dbReference>
<dbReference type="InterPro" id="IPR018177">
    <property type="entry name" value="L-lactate_DH_AS"/>
</dbReference>
<dbReference type="InterPro" id="IPR022383">
    <property type="entry name" value="Lactate/malate_DH_C"/>
</dbReference>
<dbReference type="InterPro" id="IPR001236">
    <property type="entry name" value="Lactate/malate_DH_N"/>
</dbReference>
<dbReference type="InterPro" id="IPR015955">
    <property type="entry name" value="Lactate_DH/Glyco_Ohase_4_C"/>
</dbReference>
<dbReference type="InterPro" id="IPR036291">
    <property type="entry name" value="NAD(P)-bd_dom_sf"/>
</dbReference>
<dbReference type="NCBIfam" id="TIGR01771">
    <property type="entry name" value="L-LDH-NAD"/>
    <property type="match status" value="1"/>
</dbReference>
<dbReference type="PANTHER" id="PTHR43128">
    <property type="entry name" value="L-2-HYDROXYCARBOXYLATE DEHYDROGENASE (NAD(P)(+))"/>
    <property type="match status" value="1"/>
</dbReference>
<dbReference type="PANTHER" id="PTHR43128:SF16">
    <property type="entry name" value="L-LACTATE DEHYDROGENASE"/>
    <property type="match status" value="1"/>
</dbReference>
<dbReference type="Pfam" id="PF02866">
    <property type="entry name" value="Ldh_1_C"/>
    <property type="match status" value="1"/>
</dbReference>
<dbReference type="Pfam" id="PF00056">
    <property type="entry name" value="Ldh_1_N"/>
    <property type="match status" value="1"/>
</dbReference>
<dbReference type="PIRSF" id="PIRSF000102">
    <property type="entry name" value="Lac_mal_DH"/>
    <property type="match status" value="1"/>
</dbReference>
<dbReference type="PRINTS" id="PR00086">
    <property type="entry name" value="LLDHDRGNASE"/>
</dbReference>
<dbReference type="SUPFAM" id="SSF56327">
    <property type="entry name" value="LDH C-terminal domain-like"/>
    <property type="match status" value="1"/>
</dbReference>
<dbReference type="SUPFAM" id="SSF51735">
    <property type="entry name" value="NAD(P)-binding Rossmann-fold domains"/>
    <property type="match status" value="1"/>
</dbReference>
<dbReference type="PROSITE" id="PS00064">
    <property type="entry name" value="L_LDH"/>
    <property type="match status" value="1"/>
</dbReference>
<gene>
    <name evidence="1" type="primary">ldh</name>
    <name type="ordered locus">Geob_0424</name>
</gene>
<sequence length="313" mass="33066">MKIGIVGCGFVGATAAYAMVMRGVGRKLVMVDVNRARARAEAADISHAVPFAHALEVIAGEYEELEGASVVLVAAGVGQKPGETRLQLLERNAAIFKEVIPQVLRHAGDAVLLVASNPVDVLTHLAASIAGELGIPSSRVVGSGTTLDTARFRSLLSSSLGIDPRHVHAYVLGEHGDSEVLGWSTVTVGGMPLDAFAHRKGASFPPGLIASIDHQVRHAAYEIISGKQATYYGIGSALANIVEVMVYDRRSILTVCTPLPEVEGVENVTIALPHLVGGRGVLETFPPALDHMEREALRNSARIVRNAIESINV</sequence>
<proteinExistence type="inferred from homology"/>
<accession>B9LZ61</accession>
<keyword id="KW-0021">Allosteric enzyme</keyword>
<keyword id="KW-0963">Cytoplasm</keyword>
<keyword id="KW-0520">NAD</keyword>
<keyword id="KW-0560">Oxidoreductase</keyword>
<keyword id="KW-0597">Phosphoprotein</keyword>
<keyword id="KW-1185">Reference proteome</keyword>
<reference key="1">
    <citation type="submission" date="2009-01" db="EMBL/GenBank/DDBJ databases">
        <title>Complete sequence of Geobacter sp. FRC-32.</title>
        <authorList>
            <consortium name="US DOE Joint Genome Institute"/>
            <person name="Lucas S."/>
            <person name="Copeland A."/>
            <person name="Lapidus A."/>
            <person name="Glavina del Rio T."/>
            <person name="Dalin E."/>
            <person name="Tice H."/>
            <person name="Bruce D."/>
            <person name="Goodwin L."/>
            <person name="Pitluck S."/>
            <person name="Saunders E."/>
            <person name="Brettin T."/>
            <person name="Detter J.C."/>
            <person name="Han C."/>
            <person name="Larimer F."/>
            <person name="Land M."/>
            <person name="Hauser L."/>
            <person name="Kyrpides N."/>
            <person name="Ovchinnikova G."/>
            <person name="Kostka J."/>
            <person name="Richardson P."/>
        </authorList>
    </citation>
    <scope>NUCLEOTIDE SEQUENCE [LARGE SCALE GENOMIC DNA]</scope>
    <source>
        <strain>DSM 22248 / JCM 15807 / FRC-32</strain>
    </source>
</reference>
<protein>
    <recommendedName>
        <fullName evidence="1">L-lactate dehydrogenase</fullName>
        <shortName evidence="1">L-LDH</shortName>
        <ecNumber evidence="1">1.1.1.27</ecNumber>
    </recommendedName>
</protein>
<evidence type="ECO:0000255" key="1">
    <source>
        <dbReference type="HAMAP-Rule" id="MF_00488"/>
    </source>
</evidence>
<feature type="chain" id="PRO_1000190775" description="L-lactate dehydrogenase">
    <location>
        <begin position="1"/>
        <end position="313"/>
    </location>
</feature>
<feature type="active site" description="Proton acceptor" evidence="1">
    <location>
        <position position="175"/>
    </location>
</feature>
<feature type="binding site" evidence="1">
    <location>
        <position position="11"/>
    </location>
    <ligand>
        <name>NAD(+)</name>
        <dbReference type="ChEBI" id="CHEBI:57540"/>
    </ligand>
</feature>
<feature type="binding site" evidence="1">
    <location>
        <position position="32"/>
    </location>
    <ligand>
        <name>NAD(+)</name>
        <dbReference type="ChEBI" id="CHEBI:57540"/>
    </ligand>
</feature>
<feature type="binding site" evidence="1">
    <location>
        <position position="37"/>
    </location>
    <ligand>
        <name>NAD(+)</name>
        <dbReference type="ChEBI" id="CHEBI:57540"/>
    </ligand>
</feature>
<feature type="binding site" evidence="1">
    <location>
        <position position="62"/>
    </location>
    <ligand>
        <name>NAD(+)</name>
        <dbReference type="ChEBI" id="CHEBI:57540"/>
    </ligand>
</feature>
<feature type="binding site" evidence="1">
    <location>
        <begin position="76"/>
        <end position="77"/>
    </location>
    <ligand>
        <name>NAD(+)</name>
        <dbReference type="ChEBI" id="CHEBI:57540"/>
    </ligand>
</feature>
<feature type="binding site" evidence="1">
    <location>
        <position position="79"/>
    </location>
    <ligand>
        <name>substrate</name>
    </ligand>
</feature>
<feature type="binding site" evidence="1">
    <location>
        <position position="85"/>
    </location>
    <ligand>
        <name>substrate</name>
    </ligand>
</feature>
<feature type="binding site" evidence="1">
    <location>
        <begin position="115"/>
        <end position="117"/>
    </location>
    <ligand>
        <name>NAD(+)</name>
        <dbReference type="ChEBI" id="CHEBI:57540"/>
    </ligand>
</feature>
<feature type="binding site" evidence="1">
    <location>
        <begin position="117"/>
        <end position="120"/>
    </location>
    <ligand>
        <name>substrate</name>
    </ligand>
</feature>
<feature type="binding site" evidence="1">
    <location>
        <position position="143"/>
    </location>
    <ligand>
        <name>NAD(+)</name>
        <dbReference type="ChEBI" id="CHEBI:57540"/>
    </ligand>
</feature>
<feature type="binding site" evidence="1">
    <location>
        <begin position="148"/>
        <end position="151"/>
    </location>
    <ligand>
        <name>substrate</name>
    </ligand>
</feature>
<feature type="binding site" evidence="1">
    <location>
        <position position="153"/>
    </location>
    <ligand>
        <name>beta-D-fructose 1,6-bisphosphate</name>
        <dbReference type="ChEBI" id="CHEBI:32966"/>
        <note>allosteric activator</note>
    </ligand>
</feature>
<feature type="binding site" evidence="1">
    <location>
        <position position="168"/>
    </location>
    <ligand>
        <name>beta-D-fructose 1,6-bisphosphate</name>
        <dbReference type="ChEBI" id="CHEBI:32966"/>
        <note>allosteric activator</note>
    </ligand>
</feature>
<feature type="binding site" evidence="1">
    <location>
        <position position="230"/>
    </location>
    <ligand>
        <name>substrate</name>
    </ligand>
</feature>
<feature type="modified residue" description="Phosphotyrosine" evidence="1">
    <location>
        <position position="221"/>
    </location>
</feature>
<name>LDH_GEODF</name>
<comment type="function">
    <text evidence="1">Catalyzes the conversion of lactate to pyruvate.</text>
</comment>
<comment type="catalytic activity">
    <reaction evidence="1">
        <text>(S)-lactate + NAD(+) = pyruvate + NADH + H(+)</text>
        <dbReference type="Rhea" id="RHEA:23444"/>
        <dbReference type="ChEBI" id="CHEBI:15361"/>
        <dbReference type="ChEBI" id="CHEBI:15378"/>
        <dbReference type="ChEBI" id="CHEBI:16651"/>
        <dbReference type="ChEBI" id="CHEBI:57540"/>
        <dbReference type="ChEBI" id="CHEBI:57945"/>
        <dbReference type="EC" id="1.1.1.27"/>
    </reaction>
</comment>
<comment type="activity regulation">
    <text evidence="1">Allosterically activated by fructose 1,6-bisphosphate (FBP).</text>
</comment>
<comment type="pathway">
    <text evidence="1">Fermentation; pyruvate fermentation to lactate; (S)-lactate from pyruvate: step 1/1.</text>
</comment>
<comment type="subunit">
    <text evidence="1">Homotetramer.</text>
</comment>
<comment type="subcellular location">
    <subcellularLocation>
        <location evidence="1">Cytoplasm</location>
    </subcellularLocation>
</comment>
<comment type="similarity">
    <text evidence="1">Belongs to the LDH/MDH superfamily. LDH family.</text>
</comment>